<reference key="1">
    <citation type="submission" date="2007-12" db="EMBL/GenBank/DDBJ databases">
        <title>Complete sequence of Methylobacterium extorquens PA1.</title>
        <authorList>
            <consortium name="US DOE Joint Genome Institute"/>
            <person name="Copeland A."/>
            <person name="Lucas S."/>
            <person name="Lapidus A."/>
            <person name="Barry K."/>
            <person name="Glavina del Rio T."/>
            <person name="Dalin E."/>
            <person name="Tice H."/>
            <person name="Pitluck S."/>
            <person name="Saunders E."/>
            <person name="Brettin T."/>
            <person name="Bruce D."/>
            <person name="Detter J.C."/>
            <person name="Han C."/>
            <person name="Schmutz J."/>
            <person name="Larimer F."/>
            <person name="Land M."/>
            <person name="Hauser L."/>
            <person name="Kyrpides N."/>
            <person name="Kim E."/>
            <person name="Marx C."/>
            <person name="Richardson P."/>
        </authorList>
    </citation>
    <scope>NUCLEOTIDE SEQUENCE [LARGE SCALE GENOMIC DNA]</scope>
    <source>
        <strain>PA1</strain>
    </source>
</reference>
<proteinExistence type="inferred from homology"/>
<protein>
    <recommendedName>
        <fullName evidence="1">tRNA dimethylallyltransferase</fullName>
        <ecNumber evidence="1">2.5.1.75</ecNumber>
    </recommendedName>
    <alternativeName>
        <fullName evidence="1">Dimethylallyl diphosphate:tRNA dimethylallyltransferase</fullName>
        <shortName evidence="1">DMAPP:tRNA dimethylallyltransferase</shortName>
        <shortName evidence="1">DMATase</shortName>
    </alternativeName>
    <alternativeName>
        <fullName evidence="1">Isopentenyl-diphosphate:tRNA isopentenyltransferase</fullName>
        <shortName evidence="1">IPP transferase</shortName>
        <shortName evidence="1">IPPT</shortName>
        <shortName evidence="1">IPTase</shortName>
    </alternativeName>
</protein>
<sequence length="317" mass="34630">MQSPDGQETGRPAAILIAGPTASGKSALGLRIARAFGGTVINTDSMQVYADLRVLSARPTAEEEGLAPHRLYGSIDGAVNFSVGHFQRQAAALLSEMDAGSLPVFVGGTGLYFRSLDEGISDLPEVPDAVRQRIRIEADGQPTETLHAALALRDPESAERLRPSDRMRVMRALEIHAATGRSIGSFHEARVPGPLAGKPLLKLFLATEREALRQRIDARFVTMMEQGALDEVAALRERRLDPLLPVMRAHGVPGLIAHLDGTISRQEAIQRGQGDTRRYAKRQFTWFRHQMGEAWHWTTPEAAWSLVQARLSAPAGR</sequence>
<accession>A9W640</accession>
<organism>
    <name type="scientific">Methylorubrum extorquens (strain PA1)</name>
    <name type="common">Methylobacterium extorquens</name>
    <dbReference type="NCBI Taxonomy" id="419610"/>
    <lineage>
        <taxon>Bacteria</taxon>
        <taxon>Pseudomonadati</taxon>
        <taxon>Pseudomonadota</taxon>
        <taxon>Alphaproteobacteria</taxon>
        <taxon>Hyphomicrobiales</taxon>
        <taxon>Methylobacteriaceae</taxon>
        <taxon>Methylorubrum</taxon>
    </lineage>
</organism>
<comment type="function">
    <text evidence="1">Catalyzes the transfer of a dimethylallyl group onto the adenine at position 37 in tRNAs that read codons beginning with uridine, leading to the formation of N6-(dimethylallyl)adenosine (i(6)A).</text>
</comment>
<comment type="catalytic activity">
    <reaction evidence="1">
        <text>adenosine(37) in tRNA + dimethylallyl diphosphate = N(6)-dimethylallyladenosine(37) in tRNA + diphosphate</text>
        <dbReference type="Rhea" id="RHEA:26482"/>
        <dbReference type="Rhea" id="RHEA-COMP:10162"/>
        <dbReference type="Rhea" id="RHEA-COMP:10375"/>
        <dbReference type="ChEBI" id="CHEBI:33019"/>
        <dbReference type="ChEBI" id="CHEBI:57623"/>
        <dbReference type="ChEBI" id="CHEBI:74411"/>
        <dbReference type="ChEBI" id="CHEBI:74415"/>
        <dbReference type="EC" id="2.5.1.75"/>
    </reaction>
</comment>
<comment type="cofactor">
    <cofactor evidence="1">
        <name>Mg(2+)</name>
        <dbReference type="ChEBI" id="CHEBI:18420"/>
    </cofactor>
</comment>
<comment type="subunit">
    <text evidence="1">Monomer.</text>
</comment>
<comment type="similarity">
    <text evidence="1">Belongs to the IPP transferase family.</text>
</comment>
<feature type="chain" id="PRO_1000191857" description="tRNA dimethylallyltransferase">
    <location>
        <begin position="1"/>
        <end position="317"/>
    </location>
</feature>
<feature type="region of interest" description="Interaction with substrate tRNA" evidence="1">
    <location>
        <begin position="44"/>
        <end position="47"/>
    </location>
</feature>
<feature type="binding site" evidence="1">
    <location>
        <begin position="19"/>
        <end position="26"/>
    </location>
    <ligand>
        <name>ATP</name>
        <dbReference type="ChEBI" id="CHEBI:30616"/>
    </ligand>
</feature>
<feature type="binding site" evidence="1">
    <location>
        <begin position="21"/>
        <end position="26"/>
    </location>
    <ligand>
        <name>substrate</name>
    </ligand>
</feature>
<feature type="site" description="Interaction with substrate tRNA" evidence="1">
    <location>
        <position position="109"/>
    </location>
</feature>
<feature type="site" description="Interaction with substrate tRNA" evidence="1">
    <location>
        <position position="131"/>
    </location>
</feature>
<dbReference type="EC" id="2.5.1.75" evidence="1"/>
<dbReference type="EMBL" id="CP000908">
    <property type="protein sequence ID" value="ABY31046.1"/>
    <property type="molecule type" value="Genomic_DNA"/>
</dbReference>
<dbReference type="RefSeq" id="WP_012254032.1">
    <property type="nucleotide sequence ID" value="NC_010172.1"/>
</dbReference>
<dbReference type="SMR" id="A9W640"/>
<dbReference type="KEGG" id="mex:Mext_2654"/>
<dbReference type="eggNOG" id="COG0324">
    <property type="taxonomic scope" value="Bacteria"/>
</dbReference>
<dbReference type="HOGENOM" id="CLU_032616_0_1_5"/>
<dbReference type="BioCyc" id="MEXT419610:MEXT_RS13385-MONOMER"/>
<dbReference type="GO" id="GO:0005524">
    <property type="term" value="F:ATP binding"/>
    <property type="evidence" value="ECO:0007669"/>
    <property type="project" value="UniProtKB-UniRule"/>
</dbReference>
<dbReference type="GO" id="GO:0052381">
    <property type="term" value="F:tRNA dimethylallyltransferase activity"/>
    <property type="evidence" value="ECO:0007669"/>
    <property type="project" value="UniProtKB-UniRule"/>
</dbReference>
<dbReference type="GO" id="GO:0006400">
    <property type="term" value="P:tRNA modification"/>
    <property type="evidence" value="ECO:0007669"/>
    <property type="project" value="TreeGrafter"/>
</dbReference>
<dbReference type="Gene3D" id="1.10.20.140">
    <property type="match status" value="1"/>
</dbReference>
<dbReference type="Gene3D" id="3.40.50.300">
    <property type="entry name" value="P-loop containing nucleotide triphosphate hydrolases"/>
    <property type="match status" value="1"/>
</dbReference>
<dbReference type="HAMAP" id="MF_00185">
    <property type="entry name" value="IPP_trans"/>
    <property type="match status" value="1"/>
</dbReference>
<dbReference type="InterPro" id="IPR039657">
    <property type="entry name" value="Dimethylallyltransferase"/>
</dbReference>
<dbReference type="InterPro" id="IPR018022">
    <property type="entry name" value="IPT"/>
</dbReference>
<dbReference type="InterPro" id="IPR027417">
    <property type="entry name" value="P-loop_NTPase"/>
</dbReference>
<dbReference type="NCBIfam" id="TIGR00174">
    <property type="entry name" value="miaA"/>
    <property type="match status" value="1"/>
</dbReference>
<dbReference type="PANTHER" id="PTHR11088">
    <property type="entry name" value="TRNA DIMETHYLALLYLTRANSFERASE"/>
    <property type="match status" value="1"/>
</dbReference>
<dbReference type="PANTHER" id="PTHR11088:SF60">
    <property type="entry name" value="TRNA DIMETHYLALLYLTRANSFERASE"/>
    <property type="match status" value="1"/>
</dbReference>
<dbReference type="Pfam" id="PF01715">
    <property type="entry name" value="IPPT"/>
    <property type="match status" value="1"/>
</dbReference>
<dbReference type="SUPFAM" id="SSF52540">
    <property type="entry name" value="P-loop containing nucleoside triphosphate hydrolases"/>
    <property type="match status" value="2"/>
</dbReference>
<evidence type="ECO:0000255" key="1">
    <source>
        <dbReference type="HAMAP-Rule" id="MF_00185"/>
    </source>
</evidence>
<gene>
    <name evidence="1" type="primary">miaA</name>
    <name type="ordered locus">Mext_2654</name>
</gene>
<name>MIAA_METEP</name>
<keyword id="KW-0067">ATP-binding</keyword>
<keyword id="KW-0460">Magnesium</keyword>
<keyword id="KW-0547">Nucleotide-binding</keyword>
<keyword id="KW-0808">Transferase</keyword>
<keyword id="KW-0819">tRNA processing</keyword>